<comment type="function">
    <text evidence="1">May act as a double-stranded DNA (dsDNA) mimic. Probably regulates the activity of a dsDNA-binding protein.</text>
</comment>
<comment type="similarity">
    <text evidence="1">Belongs to the putative dsDNA mimic protein family.</text>
</comment>
<reference key="1">
    <citation type="submission" date="2006-09" db="EMBL/GenBank/DDBJ databases">
        <authorList>
            <consortium name="The Klebsiella pneumonia Genome Sequencing Project"/>
            <person name="McClelland M."/>
            <person name="Sanderson E.K."/>
            <person name="Spieth J."/>
            <person name="Clifton W.S."/>
            <person name="Latreille P."/>
            <person name="Sabo A."/>
            <person name="Pepin K."/>
            <person name="Bhonagiri V."/>
            <person name="Porwollik S."/>
            <person name="Ali J."/>
            <person name="Wilson R.K."/>
        </authorList>
    </citation>
    <scope>NUCLEOTIDE SEQUENCE [LARGE SCALE GENOMIC DNA]</scope>
    <source>
        <strain>ATCC 700721 / MGH 78578</strain>
    </source>
</reference>
<evidence type="ECO:0000255" key="1">
    <source>
        <dbReference type="HAMAP-Rule" id="MF_00680"/>
    </source>
</evidence>
<sequence length="109" mass="12618">MDMDLNNRLTEDETLEQAYDIFLELAADNLDPADIILFNLQFEERGGAELFDPSADWEEHVDYDLNPDFFAEVVIGLADTDGGEINDIFARVLLCREKDHKLCHILWRE</sequence>
<proteinExistence type="inferred from homology"/>
<feature type="chain" id="PRO_1000061972" description="Putative double-stranded DNA mimic protein KPN78578_21580">
    <location>
        <begin position="1"/>
        <end position="109"/>
    </location>
</feature>
<protein>
    <recommendedName>
        <fullName evidence="1">Putative double-stranded DNA mimic protein KPN78578_21580</fullName>
    </recommendedName>
</protein>
<gene>
    <name type="ordered locus">KPN78578_21580</name>
    <name type="ORF">KPN_02191</name>
</gene>
<organism>
    <name type="scientific">Klebsiella pneumoniae subsp. pneumoniae (strain ATCC 700721 / MGH 78578)</name>
    <dbReference type="NCBI Taxonomy" id="272620"/>
    <lineage>
        <taxon>Bacteria</taxon>
        <taxon>Pseudomonadati</taxon>
        <taxon>Pseudomonadota</taxon>
        <taxon>Gammaproteobacteria</taxon>
        <taxon>Enterobacterales</taxon>
        <taxon>Enterobacteriaceae</taxon>
        <taxon>Klebsiella/Raoultella group</taxon>
        <taxon>Klebsiella</taxon>
        <taxon>Klebsiella pneumoniae complex</taxon>
    </lineage>
</organism>
<accession>A6TAJ8</accession>
<name>Y2158_KLEP7</name>
<dbReference type="EMBL" id="CP000647">
    <property type="protein sequence ID" value="ABR77619.1"/>
    <property type="molecule type" value="Genomic_DNA"/>
</dbReference>
<dbReference type="RefSeq" id="WP_002910079.1">
    <property type="nucleotide sequence ID" value="NC_009648.1"/>
</dbReference>
<dbReference type="SMR" id="A6TAJ8"/>
<dbReference type="STRING" id="272620.KPN_02191"/>
<dbReference type="PaxDb" id="272620-KPN_02191"/>
<dbReference type="EnsemblBacteria" id="ABR77619">
    <property type="protein sequence ID" value="ABR77619"/>
    <property type="gene ID" value="KPN_02191"/>
</dbReference>
<dbReference type="KEGG" id="kpn:KPN_02191"/>
<dbReference type="HOGENOM" id="CLU_143392_0_0_6"/>
<dbReference type="Proteomes" id="UP000000265">
    <property type="component" value="Chromosome"/>
</dbReference>
<dbReference type="Gene3D" id="3.10.450.140">
    <property type="entry name" value="dsDNA mimic, putative"/>
    <property type="match status" value="1"/>
</dbReference>
<dbReference type="HAMAP" id="MF_00680">
    <property type="entry name" value="Put_dsDNA_mimic"/>
    <property type="match status" value="1"/>
</dbReference>
<dbReference type="InterPro" id="IPR007376">
    <property type="entry name" value="dsDNA_mimic_put"/>
</dbReference>
<dbReference type="InterPro" id="IPR036763">
    <property type="entry name" value="Put_dsDNA_mimic_sf"/>
</dbReference>
<dbReference type="NCBIfam" id="NF003469">
    <property type="entry name" value="PRK05094.1"/>
    <property type="match status" value="1"/>
</dbReference>
<dbReference type="Pfam" id="PF04269">
    <property type="entry name" value="DUF440"/>
    <property type="match status" value="1"/>
</dbReference>
<dbReference type="PIRSF" id="PIRSF004916">
    <property type="entry name" value="UCP004916"/>
    <property type="match status" value="1"/>
</dbReference>
<dbReference type="SUPFAM" id="SSF102816">
    <property type="entry name" value="Putative dsDNA mimic"/>
    <property type="match status" value="1"/>
</dbReference>